<keyword id="KW-0963">Cytoplasm</keyword>
<keyword id="KW-0251">Elongation factor</keyword>
<keyword id="KW-0648">Protein biosynthesis</keyword>
<keyword id="KW-1185">Reference proteome</keyword>
<accession>Q169H6</accession>
<feature type="chain" id="PRO_1000010838" description="Elongation factor P">
    <location>
        <begin position="1"/>
        <end position="187"/>
    </location>
</feature>
<reference key="1">
    <citation type="journal article" date="2007" name="J. Bacteriol.">
        <title>The complete genome sequence of Roseobacter denitrificans reveals a mixotrophic rather than photosynthetic metabolism.</title>
        <authorList>
            <person name="Swingley W.D."/>
            <person name="Sadekar S."/>
            <person name="Mastrian S.D."/>
            <person name="Matthies H.J."/>
            <person name="Hao J."/>
            <person name="Ramos H."/>
            <person name="Acharya C.R."/>
            <person name="Conrad A.L."/>
            <person name="Taylor H.L."/>
            <person name="Dejesa L.C."/>
            <person name="Shah M.K."/>
            <person name="O'Huallachain M.E."/>
            <person name="Lince M.T."/>
            <person name="Blankenship R.E."/>
            <person name="Beatty J.T."/>
            <person name="Touchman J.W."/>
        </authorList>
    </citation>
    <scope>NUCLEOTIDE SEQUENCE [LARGE SCALE GENOMIC DNA]</scope>
    <source>
        <strain>ATCC 33942 / OCh 114</strain>
    </source>
</reference>
<organism>
    <name type="scientific">Roseobacter denitrificans (strain ATCC 33942 / OCh 114)</name>
    <name type="common">Erythrobacter sp. (strain OCh 114)</name>
    <name type="synonym">Roseobacter denitrificans</name>
    <dbReference type="NCBI Taxonomy" id="375451"/>
    <lineage>
        <taxon>Bacteria</taxon>
        <taxon>Pseudomonadati</taxon>
        <taxon>Pseudomonadota</taxon>
        <taxon>Alphaproteobacteria</taxon>
        <taxon>Rhodobacterales</taxon>
        <taxon>Roseobacteraceae</taxon>
        <taxon>Roseobacter</taxon>
    </lineage>
</organism>
<name>EFP_ROSDO</name>
<evidence type="ECO:0000255" key="1">
    <source>
        <dbReference type="HAMAP-Rule" id="MF_00141"/>
    </source>
</evidence>
<protein>
    <recommendedName>
        <fullName evidence="1">Elongation factor P</fullName>
        <shortName evidence="1">EF-P</shortName>
    </recommendedName>
</protein>
<dbReference type="EMBL" id="CP000362">
    <property type="protein sequence ID" value="ABG31367.1"/>
    <property type="molecule type" value="Genomic_DNA"/>
</dbReference>
<dbReference type="RefSeq" id="WP_011567986.1">
    <property type="nucleotide sequence ID" value="NC_008209.1"/>
</dbReference>
<dbReference type="SMR" id="Q169H6"/>
<dbReference type="STRING" id="375451.RD1_1746"/>
<dbReference type="KEGG" id="rde:RD1_1746"/>
<dbReference type="eggNOG" id="COG0231">
    <property type="taxonomic scope" value="Bacteria"/>
</dbReference>
<dbReference type="HOGENOM" id="CLU_074944_1_1_5"/>
<dbReference type="OrthoDB" id="9801844at2"/>
<dbReference type="UniPathway" id="UPA00345"/>
<dbReference type="Proteomes" id="UP000007029">
    <property type="component" value="Chromosome"/>
</dbReference>
<dbReference type="GO" id="GO:0005737">
    <property type="term" value="C:cytoplasm"/>
    <property type="evidence" value="ECO:0007669"/>
    <property type="project" value="UniProtKB-SubCell"/>
</dbReference>
<dbReference type="GO" id="GO:0003746">
    <property type="term" value="F:translation elongation factor activity"/>
    <property type="evidence" value="ECO:0007669"/>
    <property type="project" value="UniProtKB-UniRule"/>
</dbReference>
<dbReference type="GO" id="GO:0043043">
    <property type="term" value="P:peptide biosynthetic process"/>
    <property type="evidence" value="ECO:0007669"/>
    <property type="project" value="InterPro"/>
</dbReference>
<dbReference type="CDD" id="cd04470">
    <property type="entry name" value="S1_EF-P_repeat_1"/>
    <property type="match status" value="1"/>
</dbReference>
<dbReference type="CDD" id="cd05794">
    <property type="entry name" value="S1_EF-P_repeat_2"/>
    <property type="match status" value="1"/>
</dbReference>
<dbReference type="FunFam" id="2.30.30.30:FF:000003">
    <property type="entry name" value="Elongation factor P"/>
    <property type="match status" value="1"/>
</dbReference>
<dbReference type="FunFam" id="2.40.50.140:FF:000004">
    <property type="entry name" value="Elongation factor P"/>
    <property type="match status" value="1"/>
</dbReference>
<dbReference type="FunFam" id="2.40.50.140:FF:000009">
    <property type="entry name" value="Elongation factor P"/>
    <property type="match status" value="1"/>
</dbReference>
<dbReference type="Gene3D" id="2.30.30.30">
    <property type="match status" value="1"/>
</dbReference>
<dbReference type="Gene3D" id="2.40.50.140">
    <property type="entry name" value="Nucleic acid-binding proteins"/>
    <property type="match status" value="2"/>
</dbReference>
<dbReference type="HAMAP" id="MF_00141">
    <property type="entry name" value="EF_P"/>
    <property type="match status" value="1"/>
</dbReference>
<dbReference type="InterPro" id="IPR015365">
    <property type="entry name" value="Elong-fact-P_C"/>
</dbReference>
<dbReference type="InterPro" id="IPR012340">
    <property type="entry name" value="NA-bd_OB-fold"/>
</dbReference>
<dbReference type="InterPro" id="IPR014722">
    <property type="entry name" value="Rib_uL2_dom2"/>
</dbReference>
<dbReference type="InterPro" id="IPR020599">
    <property type="entry name" value="Transl_elong_fac_P/YeiP"/>
</dbReference>
<dbReference type="InterPro" id="IPR013185">
    <property type="entry name" value="Transl_elong_KOW-like"/>
</dbReference>
<dbReference type="InterPro" id="IPR001059">
    <property type="entry name" value="Transl_elong_P/YeiP_cen"/>
</dbReference>
<dbReference type="InterPro" id="IPR013852">
    <property type="entry name" value="Transl_elong_P/YeiP_CS"/>
</dbReference>
<dbReference type="InterPro" id="IPR011768">
    <property type="entry name" value="Transl_elongation_fac_P"/>
</dbReference>
<dbReference type="InterPro" id="IPR008991">
    <property type="entry name" value="Translation_prot_SH3-like_sf"/>
</dbReference>
<dbReference type="NCBIfam" id="TIGR00038">
    <property type="entry name" value="efp"/>
    <property type="match status" value="1"/>
</dbReference>
<dbReference type="NCBIfam" id="NF001810">
    <property type="entry name" value="PRK00529.1"/>
    <property type="match status" value="1"/>
</dbReference>
<dbReference type="PANTHER" id="PTHR30053">
    <property type="entry name" value="ELONGATION FACTOR P"/>
    <property type="match status" value="1"/>
</dbReference>
<dbReference type="PANTHER" id="PTHR30053:SF14">
    <property type="entry name" value="TRANSLATION ELONGATION FACTOR KOW-LIKE DOMAIN-CONTAINING PROTEIN"/>
    <property type="match status" value="1"/>
</dbReference>
<dbReference type="Pfam" id="PF01132">
    <property type="entry name" value="EFP"/>
    <property type="match status" value="1"/>
</dbReference>
<dbReference type="Pfam" id="PF08207">
    <property type="entry name" value="EFP_N"/>
    <property type="match status" value="1"/>
</dbReference>
<dbReference type="Pfam" id="PF09285">
    <property type="entry name" value="Elong-fact-P_C"/>
    <property type="match status" value="1"/>
</dbReference>
<dbReference type="PIRSF" id="PIRSF005901">
    <property type="entry name" value="EF-P"/>
    <property type="match status" value="1"/>
</dbReference>
<dbReference type="SMART" id="SM01185">
    <property type="entry name" value="EFP"/>
    <property type="match status" value="1"/>
</dbReference>
<dbReference type="SMART" id="SM00841">
    <property type="entry name" value="Elong-fact-P_C"/>
    <property type="match status" value="1"/>
</dbReference>
<dbReference type="SUPFAM" id="SSF50249">
    <property type="entry name" value="Nucleic acid-binding proteins"/>
    <property type="match status" value="2"/>
</dbReference>
<dbReference type="SUPFAM" id="SSF50104">
    <property type="entry name" value="Translation proteins SH3-like domain"/>
    <property type="match status" value="1"/>
</dbReference>
<dbReference type="PROSITE" id="PS01275">
    <property type="entry name" value="EFP"/>
    <property type="match status" value="1"/>
</dbReference>
<gene>
    <name evidence="1" type="primary">efp</name>
    <name type="ordered locus">RD1_1746</name>
</gene>
<comment type="function">
    <text evidence="1">Involved in peptide bond synthesis. Stimulates efficient translation and peptide-bond synthesis on native or reconstituted 70S ribosomes in vitro. Probably functions indirectly by altering the affinity of the ribosome for aminoacyl-tRNA, thus increasing their reactivity as acceptors for peptidyl transferase.</text>
</comment>
<comment type="pathway">
    <text evidence="1">Protein biosynthesis; polypeptide chain elongation.</text>
</comment>
<comment type="subcellular location">
    <subcellularLocation>
        <location evidence="1">Cytoplasm</location>
    </subcellularLocation>
</comment>
<comment type="similarity">
    <text evidence="1">Belongs to the elongation factor P family.</text>
</comment>
<sequence length="187" mass="21020">MPKINGNEIRPGNVLEHNDGLWAAVKVDHVKPGKGGAFAQVEMRNLRNGSKLNERFRSADKVERVRLEQKDQQFLYEDAGMLVVMDTETYEQVQLPAELLGERRPFLQDGMTIVVEFYEEEALNATLPQKVVCKIVETEAVVKGQTAAKSFKPALLENGVKVMVPPFVGQDENIVVNTETMEYSERA</sequence>
<proteinExistence type="inferred from homology"/>